<sequence length="69" mass="7721">MSDIETLKAEIKKLSAKSVNAKMNLHDLSEDLPTNWQSILEVAQETYNTFKTLEDARKKLKELEAGAAA</sequence>
<comment type="similarity">
    <text evidence="1">Belongs to the UPF0437 family.</text>
</comment>
<organism>
    <name type="scientific">Azorhizobium caulinodans (strain ATCC 43989 / DSM 5975 / JCM 20966 / LMG 6465 / NBRC 14845 / NCIMB 13405 / ORS 571)</name>
    <dbReference type="NCBI Taxonomy" id="438753"/>
    <lineage>
        <taxon>Bacteria</taxon>
        <taxon>Pseudomonadati</taxon>
        <taxon>Pseudomonadota</taxon>
        <taxon>Alphaproteobacteria</taxon>
        <taxon>Hyphomicrobiales</taxon>
        <taxon>Xanthobacteraceae</taxon>
        <taxon>Azorhizobium</taxon>
    </lineage>
</organism>
<name>Y3451_AZOC5</name>
<keyword id="KW-0535">Nitrogen fixation</keyword>
<keyword id="KW-1185">Reference proteome</keyword>
<proteinExistence type="inferred from homology"/>
<dbReference type="EMBL" id="X55450">
    <property type="protein sequence ID" value="CAA39095.1"/>
    <property type="molecule type" value="Genomic_DNA"/>
</dbReference>
<dbReference type="EMBL" id="AP009384">
    <property type="protein sequence ID" value="BAF89449.1"/>
    <property type="molecule type" value="Genomic_DNA"/>
</dbReference>
<dbReference type="PIR" id="S14074">
    <property type="entry name" value="S14074"/>
</dbReference>
<dbReference type="RefSeq" id="WP_012171974.1">
    <property type="nucleotide sequence ID" value="NC_009937.1"/>
</dbReference>
<dbReference type="SMR" id="P26486"/>
<dbReference type="STRING" id="438753.AZC_3451"/>
<dbReference type="KEGG" id="azc:AZC_3451"/>
<dbReference type="eggNOG" id="COG5420">
    <property type="taxonomic scope" value="Bacteria"/>
</dbReference>
<dbReference type="HOGENOM" id="CLU_187695_0_0_5"/>
<dbReference type="Proteomes" id="UP000000270">
    <property type="component" value="Chromosome"/>
</dbReference>
<dbReference type="GO" id="GO:0009399">
    <property type="term" value="P:nitrogen fixation"/>
    <property type="evidence" value="ECO:0007669"/>
    <property type="project" value="UniProtKB-KW"/>
</dbReference>
<dbReference type="Gene3D" id="1.10.287.660">
    <property type="entry name" value="Helix hairpin bin"/>
    <property type="match status" value="1"/>
</dbReference>
<dbReference type="InterPro" id="IPR029012">
    <property type="entry name" value="Helix_hairpin_bin_sf"/>
</dbReference>
<dbReference type="InterPro" id="IPR007774">
    <property type="entry name" value="Put_N_fixation"/>
</dbReference>
<dbReference type="Pfam" id="PF05082">
    <property type="entry name" value="Rop-like"/>
    <property type="match status" value="1"/>
</dbReference>
<dbReference type="PIRSF" id="PIRSF037676">
    <property type="entry name" value="DUF683"/>
    <property type="match status" value="1"/>
</dbReference>
<accession>P26486</accession>
<accession>A8IIU5</accession>
<protein>
    <recommendedName>
        <fullName>UPF0437 protein AZC_3451</fullName>
    </recommendedName>
    <alternativeName>
        <fullName>ORF1</fullName>
    </alternativeName>
</protein>
<feature type="chain" id="PRO_0000066222" description="UPF0437 protein AZC_3451">
    <location>
        <begin position="1"/>
        <end position="69"/>
    </location>
</feature>
<reference key="1">
    <citation type="journal article" date="1991" name="Mol. Gen. Genet.">
        <title>Nucleotide sequence of the fixABC region of Azorhizobium caulinodans ORS571: similarity of the fixB product with eukaryotic flavoproteins, characterization of fixX, and identification of nifW.</title>
        <authorList>
            <person name="Arigoni F."/>
            <person name="Kaminski P.A."/>
            <person name="Hennecke H."/>
            <person name="Elmerich C."/>
        </authorList>
    </citation>
    <scope>NUCLEOTIDE SEQUENCE [GENOMIC DNA]</scope>
</reference>
<reference key="2">
    <citation type="submission" date="2007-04" db="EMBL/GenBank/DDBJ databases">
        <title>Complete genome sequence of the nitrogen-fixing bacterium Azorhizobium caulinodans ORS571.</title>
        <authorList>
            <person name="Lee K.B."/>
            <person name="Backer P.D."/>
            <person name="Aono T."/>
            <person name="Liu C.T."/>
            <person name="Suzuki S."/>
            <person name="Suzuki T."/>
            <person name="Kaneko T."/>
            <person name="Yamada M."/>
            <person name="Tabata S."/>
            <person name="Kupfer D.M."/>
            <person name="Najar F.Z."/>
            <person name="Wiley G.B."/>
            <person name="Roe B."/>
            <person name="Binnewies T."/>
            <person name="Ussery D."/>
            <person name="Vereecke D."/>
            <person name="Gevers D."/>
            <person name="Holsters M."/>
            <person name="Oyaizu H."/>
        </authorList>
    </citation>
    <scope>NUCLEOTIDE SEQUENCE [LARGE SCALE GENOMIC DNA]</scope>
    <source>
        <strain>ATCC 43989 / DSM 5975 / JCM 20966 / LMG 6465 / NBRC 14845 / NCIMB 13405 / ORS 571</strain>
    </source>
</reference>
<evidence type="ECO:0000305" key="1"/>
<gene>
    <name type="ordered locus">AZC_3451</name>
</gene>